<reference key="1">
    <citation type="submission" date="2006-03" db="EMBL/GenBank/DDBJ databases">
        <title>Complete sequence of chromosome of Psychrobacter cryohalolentis K5.</title>
        <authorList>
            <consortium name="US DOE Joint Genome Institute"/>
            <person name="Copeland A."/>
            <person name="Lucas S."/>
            <person name="Lapidus A."/>
            <person name="Barry K."/>
            <person name="Detter J.C."/>
            <person name="Glavina T."/>
            <person name="Hammon N."/>
            <person name="Israni S."/>
            <person name="Dalin E."/>
            <person name="Tice H."/>
            <person name="Pitluck S."/>
            <person name="Brettin T."/>
            <person name="Bruce D."/>
            <person name="Han C."/>
            <person name="Tapia R."/>
            <person name="Sims D.R."/>
            <person name="Gilna P."/>
            <person name="Schmutz J."/>
            <person name="Larimer F."/>
            <person name="Land M."/>
            <person name="Hauser L."/>
            <person name="Kyrpides N."/>
            <person name="Kim E."/>
            <person name="Richardson P."/>
        </authorList>
    </citation>
    <scope>NUCLEOTIDE SEQUENCE [LARGE SCALE GENOMIC DNA]</scope>
    <source>
        <strain>ATCC BAA-1226 / DSM 17306 / VKM B-2378 / K5</strain>
    </source>
</reference>
<organism>
    <name type="scientific">Psychrobacter cryohalolentis (strain ATCC BAA-1226 / DSM 17306 / VKM B-2378 / K5)</name>
    <dbReference type="NCBI Taxonomy" id="335284"/>
    <lineage>
        <taxon>Bacteria</taxon>
        <taxon>Pseudomonadati</taxon>
        <taxon>Pseudomonadota</taxon>
        <taxon>Gammaproteobacteria</taxon>
        <taxon>Moraxellales</taxon>
        <taxon>Moraxellaceae</taxon>
        <taxon>Psychrobacter</taxon>
    </lineage>
</organism>
<protein>
    <recommendedName>
        <fullName evidence="1">Alanine--tRNA ligase</fullName>
        <ecNumber evidence="1">6.1.1.7</ecNumber>
    </recommendedName>
    <alternativeName>
        <fullName evidence="1">Alanyl-tRNA synthetase</fullName>
        <shortName evidence="1">AlaRS</shortName>
    </alternativeName>
</protein>
<sequence>MSQPFRSADIRQAFIDFFISKQHTPVASSSLIPHNDPTLLFTNAGMNQFKETFLGMEPRDYTRAVTSQKCVRAGGKHNDLDNVGYTARHHTFFEMLGNFSFGDYFKQAGIGYIWEFLTSDEWLAIDKNRLYVTIYETDDEAFDIWHKDIGIPSERIIRIGDNKGAPYASDNFWTMGDTGPCGPCTEVFYDHGADIEGGLPGTPEEDGDRYIEIWNCVFMQFNRQKDGSMLPLPAPSVDTGMGLERISAIMQGVHGNYEIDLFVHLMDAAAEILEIENQQQSSLKVIADHIRAVSFLIADGVTPSNEGRGYVLRRIIRRAVRHGNKLGADSEFFYKMVAPLVAEMGTAYPELKDKQSVIENAIQKEETQFAKTLAQGLRLLASELEGLKDGDTLSGEAAFKLYDTYGFPVDLTADITRERGIVIDEAEFDEHMQAQRERARDAGKFDVDYSSVIQVENPTTFIGYEQLEEEGVTIDALYQDGNPADSLTEGMEGVIVLDRTPFYAEGGGQVGELGEIRTASGVFEVQDTKKSGQAIIHYGVVTMGDISTKQTADAQVLSSIRAASAKNHSATHLLHAALREVLGDAVTQKGSLVSSEVLRFDFSYDKPVSTAEITRIERLVNEQIQANTPARIENMSIDEAMKQGAMALFGEKYGSDVRVLTMGTGSIIDGQRKPFSIELCGGLHVKRTGDIGVLKITSESGIAAGIRRIEAVTGMNAIKNIQQSEQQLSELASQLKVKRPEVAQRVRTMADKQRELEKQLERLEQKIASAQAANLLDDVQTIAGTPVLISTLSGIDGKSIRTLMDDIKSKLPDSVIVLIGDKDEQLALAASVAKSVTAKVKAGDIIRHLASELGGKGGGKPDYAQGGAPKAANTNAVVNALPAWIADQLG</sequence>
<name>SYA_PSYCK</name>
<proteinExistence type="inferred from homology"/>
<accession>Q1QA88</accession>
<evidence type="ECO:0000255" key="1">
    <source>
        <dbReference type="HAMAP-Rule" id="MF_00036"/>
    </source>
</evidence>
<gene>
    <name evidence="1" type="primary">alaS</name>
    <name type="ordered locus">Pcryo_1638</name>
</gene>
<comment type="function">
    <text evidence="1">Catalyzes the attachment of alanine to tRNA(Ala) in a two-step reaction: alanine is first activated by ATP to form Ala-AMP and then transferred to the acceptor end of tRNA(Ala). Also edits incorrectly charged Ser-tRNA(Ala) and Gly-tRNA(Ala) via its editing domain.</text>
</comment>
<comment type="catalytic activity">
    <reaction evidence="1">
        <text>tRNA(Ala) + L-alanine + ATP = L-alanyl-tRNA(Ala) + AMP + diphosphate</text>
        <dbReference type="Rhea" id="RHEA:12540"/>
        <dbReference type="Rhea" id="RHEA-COMP:9657"/>
        <dbReference type="Rhea" id="RHEA-COMP:9923"/>
        <dbReference type="ChEBI" id="CHEBI:30616"/>
        <dbReference type="ChEBI" id="CHEBI:33019"/>
        <dbReference type="ChEBI" id="CHEBI:57972"/>
        <dbReference type="ChEBI" id="CHEBI:78442"/>
        <dbReference type="ChEBI" id="CHEBI:78497"/>
        <dbReference type="ChEBI" id="CHEBI:456215"/>
        <dbReference type="EC" id="6.1.1.7"/>
    </reaction>
</comment>
<comment type="cofactor">
    <cofactor evidence="1">
        <name>Zn(2+)</name>
        <dbReference type="ChEBI" id="CHEBI:29105"/>
    </cofactor>
    <text evidence="1">Binds 1 zinc ion per subunit.</text>
</comment>
<comment type="subcellular location">
    <subcellularLocation>
        <location evidence="1">Cytoplasm</location>
    </subcellularLocation>
</comment>
<comment type="domain">
    <text evidence="1">Consists of three domains; the N-terminal catalytic domain, the editing domain and the C-terminal C-Ala domain. The editing domain removes incorrectly charged amino acids, while the C-Ala domain, along with tRNA(Ala), serves as a bridge to cooperatively bring together the editing and aminoacylation centers thus stimulating deacylation of misacylated tRNAs.</text>
</comment>
<comment type="similarity">
    <text evidence="1">Belongs to the class-II aminoacyl-tRNA synthetase family.</text>
</comment>
<dbReference type="EC" id="6.1.1.7" evidence="1"/>
<dbReference type="EMBL" id="CP000323">
    <property type="protein sequence ID" value="ABE75415.1"/>
    <property type="molecule type" value="Genomic_DNA"/>
</dbReference>
<dbReference type="RefSeq" id="WP_011513964.1">
    <property type="nucleotide sequence ID" value="NC_007969.1"/>
</dbReference>
<dbReference type="SMR" id="Q1QA88"/>
<dbReference type="STRING" id="335284.Pcryo_1638"/>
<dbReference type="KEGG" id="pcr:Pcryo_1638"/>
<dbReference type="eggNOG" id="COG0013">
    <property type="taxonomic scope" value="Bacteria"/>
</dbReference>
<dbReference type="HOGENOM" id="CLU_004485_1_1_6"/>
<dbReference type="Proteomes" id="UP000002425">
    <property type="component" value="Chromosome"/>
</dbReference>
<dbReference type="GO" id="GO:0005829">
    <property type="term" value="C:cytosol"/>
    <property type="evidence" value="ECO:0007669"/>
    <property type="project" value="TreeGrafter"/>
</dbReference>
<dbReference type="GO" id="GO:0004813">
    <property type="term" value="F:alanine-tRNA ligase activity"/>
    <property type="evidence" value="ECO:0007669"/>
    <property type="project" value="UniProtKB-UniRule"/>
</dbReference>
<dbReference type="GO" id="GO:0002161">
    <property type="term" value="F:aminoacyl-tRNA deacylase activity"/>
    <property type="evidence" value="ECO:0007669"/>
    <property type="project" value="TreeGrafter"/>
</dbReference>
<dbReference type="GO" id="GO:0005524">
    <property type="term" value="F:ATP binding"/>
    <property type="evidence" value="ECO:0007669"/>
    <property type="project" value="UniProtKB-UniRule"/>
</dbReference>
<dbReference type="GO" id="GO:0000049">
    <property type="term" value="F:tRNA binding"/>
    <property type="evidence" value="ECO:0007669"/>
    <property type="project" value="UniProtKB-KW"/>
</dbReference>
<dbReference type="GO" id="GO:0008270">
    <property type="term" value="F:zinc ion binding"/>
    <property type="evidence" value="ECO:0007669"/>
    <property type="project" value="UniProtKB-UniRule"/>
</dbReference>
<dbReference type="GO" id="GO:0006419">
    <property type="term" value="P:alanyl-tRNA aminoacylation"/>
    <property type="evidence" value="ECO:0007669"/>
    <property type="project" value="UniProtKB-UniRule"/>
</dbReference>
<dbReference type="GO" id="GO:0045892">
    <property type="term" value="P:negative regulation of DNA-templated transcription"/>
    <property type="evidence" value="ECO:0007669"/>
    <property type="project" value="TreeGrafter"/>
</dbReference>
<dbReference type="CDD" id="cd00673">
    <property type="entry name" value="AlaRS_core"/>
    <property type="match status" value="1"/>
</dbReference>
<dbReference type="FunFam" id="2.40.30.130:FF:000001">
    <property type="entry name" value="Alanine--tRNA ligase"/>
    <property type="match status" value="1"/>
</dbReference>
<dbReference type="FunFam" id="3.10.310.40:FF:000001">
    <property type="entry name" value="Alanine--tRNA ligase"/>
    <property type="match status" value="1"/>
</dbReference>
<dbReference type="FunFam" id="3.30.54.20:FF:000001">
    <property type="entry name" value="Alanine--tRNA ligase"/>
    <property type="match status" value="1"/>
</dbReference>
<dbReference type="FunFam" id="3.30.930.10:FF:000004">
    <property type="entry name" value="Alanine--tRNA ligase"/>
    <property type="match status" value="1"/>
</dbReference>
<dbReference type="FunFam" id="3.30.980.10:FF:000004">
    <property type="entry name" value="Alanine--tRNA ligase, cytoplasmic"/>
    <property type="match status" value="1"/>
</dbReference>
<dbReference type="Gene3D" id="2.40.30.130">
    <property type="match status" value="1"/>
</dbReference>
<dbReference type="Gene3D" id="3.10.310.40">
    <property type="match status" value="1"/>
</dbReference>
<dbReference type="Gene3D" id="3.30.54.20">
    <property type="match status" value="1"/>
</dbReference>
<dbReference type="Gene3D" id="6.10.250.550">
    <property type="match status" value="1"/>
</dbReference>
<dbReference type="Gene3D" id="3.30.930.10">
    <property type="entry name" value="Bira Bifunctional Protein, Domain 2"/>
    <property type="match status" value="1"/>
</dbReference>
<dbReference type="Gene3D" id="3.30.980.10">
    <property type="entry name" value="Threonyl-trna Synthetase, Chain A, domain 2"/>
    <property type="match status" value="1"/>
</dbReference>
<dbReference type="HAMAP" id="MF_00036_B">
    <property type="entry name" value="Ala_tRNA_synth_B"/>
    <property type="match status" value="1"/>
</dbReference>
<dbReference type="InterPro" id="IPR045864">
    <property type="entry name" value="aa-tRNA-synth_II/BPL/LPL"/>
</dbReference>
<dbReference type="InterPro" id="IPR002318">
    <property type="entry name" value="Ala-tRNA-lgiase_IIc"/>
</dbReference>
<dbReference type="InterPro" id="IPR018162">
    <property type="entry name" value="Ala-tRNA-ligase_IIc_anticod-bd"/>
</dbReference>
<dbReference type="InterPro" id="IPR018165">
    <property type="entry name" value="Ala-tRNA-synth_IIc_core"/>
</dbReference>
<dbReference type="InterPro" id="IPR018164">
    <property type="entry name" value="Ala-tRNA-synth_IIc_N"/>
</dbReference>
<dbReference type="InterPro" id="IPR050058">
    <property type="entry name" value="Ala-tRNA_ligase"/>
</dbReference>
<dbReference type="InterPro" id="IPR023033">
    <property type="entry name" value="Ala_tRNA_ligase_euk/bac"/>
</dbReference>
<dbReference type="InterPro" id="IPR003156">
    <property type="entry name" value="DHHA1_dom"/>
</dbReference>
<dbReference type="InterPro" id="IPR018163">
    <property type="entry name" value="Thr/Ala-tRNA-synth_IIc_edit"/>
</dbReference>
<dbReference type="InterPro" id="IPR009000">
    <property type="entry name" value="Transl_B-barrel_sf"/>
</dbReference>
<dbReference type="InterPro" id="IPR012947">
    <property type="entry name" value="tRNA_SAD"/>
</dbReference>
<dbReference type="NCBIfam" id="TIGR00344">
    <property type="entry name" value="alaS"/>
    <property type="match status" value="1"/>
</dbReference>
<dbReference type="PANTHER" id="PTHR11777:SF9">
    <property type="entry name" value="ALANINE--TRNA LIGASE, CYTOPLASMIC"/>
    <property type="match status" value="1"/>
</dbReference>
<dbReference type="PANTHER" id="PTHR11777">
    <property type="entry name" value="ALANYL-TRNA SYNTHETASE"/>
    <property type="match status" value="1"/>
</dbReference>
<dbReference type="Pfam" id="PF02272">
    <property type="entry name" value="DHHA1"/>
    <property type="match status" value="1"/>
</dbReference>
<dbReference type="Pfam" id="PF01411">
    <property type="entry name" value="tRNA-synt_2c"/>
    <property type="match status" value="1"/>
</dbReference>
<dbReference type="Pfam" id="PF07973">
    <property type="entry name" value="tRNA_SAD"/>
    <property type="match status" value="1"/>
</dbReference>
<dbReference type="PRINTS" id="PR00980">
    <property type="entry name" value="TRNASYNTHALA"/>
</dbReference>
<dbReference type="SMART" id="SM00863">
    <property type="entry name" value="tRNA_SAD"/>
    <property type="match status" value="1"/>
</dbReference>
<dbReference type="SUPFAM" id="SSF55681">
    <property type="entry name" value="Class II aaRS and biotin synthetases"/>
    <property type="match status" value="1"/>
</dbReference>
<dbReference type="SUPFAM" id="SSF101353">
    <property type="entry name" value="Putative anticodon-binding domain of alanyl-tRNA synthetase (AlaRS)"/>
    <property type="match status" value="1"/>
</dbReference>
<dbReference type="SUPFAM" id="SSF55186">
    <property type="entry name" value="ThrRS/AlaRS common domain"/>
    <property type="match status" value="1"/>
</dbReference>
<dbReference type="SUPFAM" id="SSF50447">
    <property type="entry name" value="Translation proteins"/>
    <property type="match status" value="1"/>
</dbReference>
<dbReference type="PROSITE" id="PS50860">
    <property type="entry name" value="AA_TRNA_LIGASE_II_ALA"/>
    <property type="match status" value="1"/>
</dbReference>
<keyword id="KW-0030">Aminoacyl-tRNA synthetase</keyword>
<keyword id="KW-0067">ATP-binding</keyword>
<keyword id="KW-0963">Cytoplasm</keyword>
<keyword id="KW-0436">Ligase</keyword>
<keyword id="KW-0479">Metal-binding</keyword>
<keyword id="KW-0547">Nucleotide-binding</keyword>
<keyword id="KW-0648">Protein biosynthesis</keyword>
<keyword id="KW-0694">RNA-binding</keyword>
<keyword id="KW-0820">tRNA-binding</keyword>
<keyword id="KW-0862">Zinc</keyword>
<feature type="chain" id="PRO_0000347744" description="Alanine--tRNA ligase">
    <location>
        <begin position="1"/>
        <end position="890"/>
    </location>
</feature>
<feature type="binding site" evidence="1">
    <location>
        <position position="568"/>
    </location>
    <ligand>
        <name>Zn(2+)</name>
        <dbReference type="ChEBI" id="CHEBI:29105"/>
    </ligand>
</feature>
<feature type="binding site" evidence="1">
    <location>
        <position position="572"/>
    </location>
    <ligand>
        <name>Zn(2+)</name>
        <dbReference type="ChEBI" id="CHEBI:29105"/>
    </ligand>
</feature>
<feature type="binding site" evidence="1">
    <location>
        <position position="680"/>
    </location>
    <ligand>
        <name>Zn(2+)</name>
        <dbReference type="ChEBI" id="CHEBI:29105"/>
    </ligand>
</feature>
<feature type="binding site" evidence="1">
    <location>
        <position position="684"/>
    </location>
    <ligand>
        <name>Zn(2+)</name>
        <dbReference type="ChEBI" id="CHEBI:29105"/>
    </ligand>
</feature>